<name>PAT_SALG2</name>
<keyword id="KW-0032">Aminotransferase</keyword>
<keyword id="KW-0663">Pyridoxal phosphate</keyword>
<keyword id="KW-0808">Transferase</keyword>
<sequence>MNRLPSSASALACSAHALNLIEKRTLNHEEMKALNREVIDYFKEHVNPGFLEYRKSVTAGGDYGAVEWQAGSLNTLVDTQGQEFIDCLGGFGIFNVGHRNPVVVSAVQNQLAKQPLHSQELLDPLRAMLAKTLAALTPGKLKYSFFCNSGTESVEAALKLAKAYQSPRGKFTFIATSGAFHGKSLGALSATAKSTFRRPFMPLLPGFRHVPFGNIDAMSMAFSEGKKTGDEIAAVILEPIQGEGGVILPPQGYLTEVRKLCDEFGALMILDEVQTGMGRTGKMFACEHENVQPDILCLAKALGGGVMPIGATIATEEVFSVLFDNPFLHTTTFGGNPLACAAALATINVLLEQNLPAQAEQKGDTLLDGFRQLAREYPNLVHDARGKGMLIAIEFVDNETGYRFASEMFRQRVLVAGTLNNAKTIRIEPPLTLTIELCEQVLKSARNALAAMQVSVEEV</sequence>
<dbReference type="EC" id="2.6.1.82" evidence="1"/>
<dbReference type="EC" id="2.6.1.29" evidence="1"/>
<dbReference type="EMBL" id="AM933173">
    <property type="protein sequence ID" value="CAR38915.1"/>
    <property type="status" value="ALT_INIT"/>
    <property type="molecule type" value="Genomic_DNA"/>
</dbReference>
<dbReference type="SMR" id="B5REH5"/>
<dbReference type="KEGG" id="seg:SG3114"/>
<dbReference type="HOGENOM" id="CLU_016922_10_0_6"/>
<dbReference type="UniPathway" id="UPA00188">
    <property type="reaction ID" value="UER00290"/>
</dbReference>
<dbReference type="Proteomes" id="UP000008321">
    <property type="component" value="Chromosome"/>
</dbReference>
<dbReference type="GO" id="GO:0019161">
    <property type="term" value="F:diamine transaminase activity"/>
    <property type="evidence" value="ECO:0007669"/>
    <property type="project" value="UniProtKB-EC"/>
</dbReference>
<dbReference type="GO" id="GO:0042802">
    <property type="term" value="F:identical protein binding"/>
    <property type="evidence" value="ECO:0007669"/>
    <property type="project" value="TreeGrafter"/>
</dbReference>
<dbReference type="GO" id="GO:0033094">
    <property type="term" value="F:putrescine--2-oxoglutarate transaminase activity"/>
    <property type="evidence" value="ECO:0007669"/>
    <property type="project" value="UniProtKB-UniRule"/>
</dbReference>
<dbReference type="GO" id="GO:0030170">
    <property type="term" value="F:pyridoxal phosphate binding"/>
    <property type="evidence" value="ECO:0007669"/>
    <property type="project" value="UniProtKB-UniRule"/>
</dbReference>
<dbReference type="GO" id="GO:0019477">
    <property type="term" value="P:L-lysine catabolic process"/>
    <property type="evidence" value="ECO:0007669"/>
    <property type="project" value="UniProtKB-UniRule"/>
</dbReference>
<dbReference type="GO" id="GO:0009447">
    <property type="term" value="P:putrescine catabolic process"/>
    <property type="evidence" value="ECO:0007669"/>
    <property type="project" value="UniProtKB-UniRule"/>
</dbReference>
<dbReference type="CDD" id="cd00610">
    <property type="entry name" value="OAT_like"/>
    <property type="match status" value="1"/>
</dbReference>
<dbReference type="FunFam" id="3.40.640.10:FF:000004">
    <property type="entry name" value="Acetylornithine aminotransferase"/>
    <property type="match status" value="1"/>
</dbReference>
<dbReference type="Gene3D" id="3.90.1150.10">
    <property type="entry name" value="Aspartate Aminotransferase, domain 1"/>
    <property type="match status" value="1"/>
</dbReference>
<dbReference type="Gene3D" id="3.40.640.10">
    <property type="entry name" value="Type I PLP-dependent aspartate aminotransferase-like (Major domain)"/>
    <property type="match status" value="1"/>
</dbReference>
<dbReference type="HAMAP" id="MF_01276">
    <property type="entry name" value="Putres_aminotrans_3"/>
    <property type="match status" value="1"/>
</dbReference>
<dbReference type="InterPro" id="IPR005814">
    <property type="entry name" value="Aminotrans_3"/>
</dbReference>
<dbReference type="InterPro" id="IPR049704">
    <property type="entry name" value="Aminotrans_3_PPA_site"/>
</dbReference>
<dbReference type="InterPro" id="IPR050103">
    <property type="entry name" value="Class-III_PLP-dep_AT"/>
</dbReference>
<dbReference type="InterPro" id="IPR017747">
    <property type="entry name" value="Putrescine_aminotransferase"/>
</dbReference>
<dbReference type="InterPro" id="IPR015424">
    <property type="entry name" value="PyrdxlP-dep_Trfase"/>
</dbReference>
<dbReference type="InterPro" id="IPR015421">
    <property type="entry name" value="PyrdxlP-dep_Trfase_major"/>
</dbReference>
<dbReference type="InterPro" id="IPR015422">
    <property type="entry name" value="PyrdxlP-dep_Trfase_small"/>
</dbReference>
<dbReference type="NCBIfam" id="NF008570">
    <property type="entry name" value="PRK11522.1"/>
    <property type="match status" value="1"/>
</dbReference>
<dbReference type="NCBIfam" id="TIGR03372">
    <property type="entry name" value="putres_am_tran"/>
    <property type="match status" value="1"/>
</dbReference>
<dbReference type="PANTHER" id="PTHR11986">
    <property type="entry name" value="AMINOTRANSFERASE CLASS III"/>
    <property type="match status" value="1"/>
</dbReference>
<dbReference type="PANTHER" id="PTHR11986:SF112">
    <property type="entry name" value="PUTRESCINE AMINOTRANSFERASE"/>
    <property type="match status" value="1"/>
</dbReference>
<dbReference type="Pfam" id="PF00202">
    <property type="entry name" value="Aminotran_3"/>
    <property type="match status" value="1"/>
</dbReference>
<dbReference type="PIRSF" id="PIRSF000521">
    <property type="entry name" value="Transaminase_4ab_Lys_Orn"/>
    <property type="match status" value="1"/>
</dbReference>
<dbReference type="SUPFAM" id="SSF53383">
    <property type="entry name" value="PLP-dependent transferases"/>
    <property type="match status" value="1"/>
</dbReference>
<dbReference type="PROSITE" id="PS00600">
    <property type="entry name" value="AA_TRANSFER_CLASS_3"/>
    <property type="match status" value="1"/>
</dbReference>
<feature type="chain" id="PRO_0000379563" description="Putrescine aminotransferase">
    <location>
        <begin position="1"/>
        <end position="459"/>
    </location>
</feature>
<feature type="binding site" description="in other chain" evidence="1">
    <location>
        <begin position="150"/>
        <end position="151"/>
    </location>
    <ligand>
        <name>pyridoxal 5'-phosphate</name>
        <dbReference type="ChEBI" id="CHEBI:597326"/>
        <note>ligand shared between dimeric partners</note>
    </ligand>
</feature>
<feature type="binding site" description="in other chain" evidence="1">
    <location>
        <position position="274"/>
    </location>
    <ligand>
        <name>pyridoxal 5'-phosphate</name>
        <dbReference type="ChEBI" id="CHEBI:597326"/>
        <note>ligand shared between dimeric partners</note>
    </ligand>
</feature>
<feature type="binding site" evidence="1">
    <location>
        <position position="332"/>
    </location>
    <ligand>
        <name>pyridoxal 5'-phosphate</name>
        <dbReference type="ChEBI" id="CHEBI:597326"/>
        <note>ligand shared between dimeric partners</note>
    </ligand>
</feature>
<feature type="modified residue" description="N6-(pyridoxal phosphate)lysine" evidence="1">
    <location>
        <position position="300"/>
    </location>
</feature>
<organism>
    <name type="scientific">Salmonella gallinarum (strain 287/91 / NCTC 13346)</name>
    <dbReference type="NCBI Taxonomy" id="550538"/>
    <lineage>
        <taxon>Bacteria</taxon>
        <taxon>Pseudomonadati</taxon>
        <taxon>Pseudomonadota</taxon>
        <taxon>Gammaproteobacteria</taxon>
        <taxon>Enterobacterales</taxon>
        <taxon>Enterobacteriaceae</taxon>
        <taxon>Salmonella</taxon>
    </lineage>
</organism>
<comment type="function">
    <text evidence="1">Catalyzes the aminotransferase reaction from putrescine to 2-oxoglutarate, leading to glutamate and 4-aminobutanal, which spontaneously cyclizes to form 1-pyrroline. This is the first step in one of two pathways for putrescine degradation, where putrescine is converted into 4-aminobutanoate (gamma-aminobutyrate or GABA) via 4-aminobutanal. Also functions as a cadaverine transaminase in a a L-lysine degradation pathway to succinate that proceeds via cadaverine, glutarate and L-2-hydroxyglutarate.</text>
</comment>
<comment type="catalytic activity">
    <reaction evidence="1">
        <text>an alkane-alpha,omega-diamine + 2-oxoglutarate = an omega-aminoaldehyde + L-glutamate</text>
        <dbReference type="Rhea" id="RHEA:18217"/>
        <dbReference type="Rhea" id="RHEA-COMP:9766"/>
        <dbReference type="Rhea" id="RHEA-COMP:12750"/>
        <dbReference type="ChEBI" id="CHEBI:16810"/>
        <dbReference type="ChEBI" id="CHEBI:29985"/>
        <dbReference type="ChEBI" id="CHEBI:70977"/>
        <dbReference type="ChEBI" id="CHEBI:133427"/>
        <dbReference type="EC" id="2.6.1.29"/>
    </reaction>
    <physiologicalReaction direction="left-to-right" evidence="1">
        <dbReference type="Rhea" id="RHEA:18218"/>
    </physiologicalReaction>
</comment>
<comment type="catalytic activity">
    <reaction evidence="1">
        <text>putrescine + 2-oxoglutarate = 1-pyrroline + L-glutamate + H2O</text>
        <dbReference type="Rhea" id="RHEA:12268"/>
        <dbReference type="ChEBI" id="CHEBI:15377"/>
        <dbReference type="ChEBI" id="CHEBI:16810"/>
        <dbReference type="ChEBI" id="CHEBI:29985"/>
        <dbReference type="ChEBI" id="CHEBI:36781"/>
        <dbReference type="ChEBI" id="CHEBI:326268"/>
        <dbReference type="EC" id="2.6.1.82"/>
    </reaction>
    <physiologicalReaction direction="left-to-right" evidence="1">
        <dbReference type="Rhea" id="RHEA:12269"/>
    </physiologicalReaction>
</comment>
<comment type="catalytic activity">
    <reaction evidence="1">
        <text>cadaverine + 2-oxoglutarate = 5-aminopentanal + L-glutamate</text>
        <dbReference type="Rhea" id="RHEA:61624"/>
        <dbReference type="ChEBI" id="CHEBI:16810"/>
        <dbReference type="ChEBI" id="CHEBI:29985"/>
        <dbReference type="ChEBI" id="CHEBI:58384"/>
        <dbReference type="ChEBI" id="CHEBI:144896"/>
    </reaction>
    <physiologicalReaction direction="left-to-right" evidence="1">
        <dbReference type="Rhea" id="RHEA:61625"/>
    </physiologicalReaction>
</comment>
<comment type="cofactor">
    <cofactor evidence="1">
        <name>pyridoxal 5'-phosphate</name>
        <dbReference type="ChEBI" id="CHEBI:597326"/>
    </cofactor>
</comment>
<comment type="pathway">
    <text evidence="1">Amine and polyamine degradation; putrescine degradation; 4-aminobutanal from putrescine (transaminase route): step 1/1.</text>
</comment>
<comment type="similarity">
    <text evidence="1">Belongs to the class-III pyridoxal-phosphate-dependent aminotransferase family. Putrescine aminotransferase subfamily.</text>
</comment>
<comment type="sequence caution" evidence="2">
    <conflict type="erroneous initiation">
        <sequence resource="EMBL-CDS" id="CAR38915"/>
    </conflict>
</comment>
<accession>B5REH5</accession>
<gene>
    <name evidence="1" type="primary">patA</name>
    <name type="ordered locus">SG3114</name>
</gene>
<protein>
    <recommendedName>
        <fullName evidence="1">Putrescine aminotransferase</fullName>
        <shortName evidence="1">PAT</shortName>
        <shortName evidence="1">PATase</shortName>
        <ecNumber evidence="1">2.6.1.82</ecNumber>
    </recommendedName>
    <alternativeName>
        <fullName evidence="1">Cadaverine transaminase</fullName>
    </alternativeName>
    <alternativeName>
        <fullName evidence="1">Diamine transaminase</fullName>
        <ecNumber evidence="1">2.6.1.29</ecNumber>
    </alternativeName>
    <alternativeName>
        <fullName evidence="1">Putrescine transaminase</fullName>
    </alternativeName>
    <alternativeName>
        <fullName evidence="1">Putrescine--2-oxoglutaric acid transaminase</fullName>
    </alternativeName>
</protein>
<reference key="1">
    <citation type="journal article" date="2008" name="Genome Res.">
        <title>Comparative genome analysis of Salmonella enteritidis PT4 and Salmonella gallinarum 287/91 provides insights into evolutionary and host adaptation pathways.</title>
        <authorList>
            <person name="Thomson N.R."/>
            <person name="Clayton D.J."/>
            <person name="Windhorst D."/>
            <person name="Vernikos G."/>
            <person name="Davidson S."/>
            <person name="Churcher C."/>
            <person name="Quail M.A."/>
            <person name="Stevens M."/>
            <person name="Jones M.A."/>
            <person name="Watson M."/>
            <person name="Barron A."/>
            <person name="Layton A."/>
            <person name="Pickard D."/>
            <person name="Kingsley R.A."/>
            <person name="Bignell A."/>
            <person name="Clark L."/>
            <person name="Harris B."/>
            <person name="Ormond D."/>
            <person name="Abdellah Z."/>
            <person name="Brooks K."/>
            <person name="Cherevach I."/>
            <person name="Chillingworth T."/>
            <person name="Woodward J."/>
            <person name="Norberczak H."/>
            <person name="Lord A."/>
            <person name="Arrowsmith C."/>
            <person name="Jagels K."/>
            <person name="Moule S."/>
            <person name="Mungall K."/>
            <person name="Saunders M."/>
            <person name="Whitehead S."/>
            <person name="Chabalgoity J.A."/>
            <person name="Maskell D."/>
            <person name="Humphreys T."/>
            <person name="Roberts M."/>
            <person name="Barrow P.A."/>
            <person name="Dougan G."/>
            <person name="Parkhill J."/>
        </authorList>
    </citation>
    <scope>NUCLEOTIDE SEQUENCE [LARGE SCALE GENOMIC DNA]</scope>
    <source>
        <strain>287/91 / NCTC 13346</strain>
    </source>
</reference>
<evidence type="ECO:0000255" key="1">
    <source>
        <dbReference type="HAMAP-Rule" id="MF_01276"/>
    </source>
</evidence>
<evidence type="ECO:0000305" key="2"/>
<proteinExistence type="inferred from homology"/>